<keyword id="KW-0067">ATP-binding</keyword>
<keyword id="KW-0378">Hydrolase</keyword>
<keyword id="KW-0460">Magnesium</keyword>
<keyword id="KW-0479">Metal-binding</keyword>
<keyword id="KW-0511">Multifunctional enzyme</keyword>
<keyword id="KW-0533">Nickel</keyword>
<keyword id="KW-0547">Nucleotide-binding</keyword>
<keyword id="KW-0548">Nucleotidyltransferase</keyword>
<keyword id="KW-1185">Reference proteome</keyword>
<keyword id="KW-0692">RNA repair</keyword>
<keyword id="KW-0694">RNA-binding</keyword>
<keyword id="KW-0808">Transferase</keyword>
<keyword id="KW-0819">tRNA processing</keyword>
<reference key="1">
    <citation type="journal article" date="2004" name="Proc. Natl. Acad. Sci. U.S.A.">
        <title>Structural flexibility in the Burkholderia mallei genome.</title>
        <authorList>
            <person name="Nierman W.C."/>
            <person name="DeShazer D."/>
            <person name="Kim H.S."/>
            <person name="Tettelin H."/>
            <person name="Nelson K.E."/>
            <person name="Feldblyum T.V."/>
            <person name="Ulrich R.L."/>
            <person name="Ronning C.M."/>
            <person name="Brinkac L.M."/>
            <person name="Daugherty S.C."/>
            <person name="Davidsen T.D."/>
            <person name="DeBoy R.T."/>
            <person name="Dimitrov G."/>
            <person name="Dodson R.J."/>
            <person name="Durkin A.S."/>
            <person name="Gwinn M.L."/>
            <person name="Haft D.H."/>
            <person name="Khouri H.M."/>
            <person name="Kolonay J.F."/>
            <person name="Madupu R."/>
            <person name="Mohammoud Y."/>
            <person name="Nelson W.C."/>
            <person name="Radune D."/>
            <person name="Romero C.M."/>
            <person name="Sarria S."/>
            <person name="Selengut J."/>
            <person name="Shamblin C."/>
            <person name="Sullivan S.A."/>
            <person name="White O."/>
            <person name="Yu Y."/>
            <person name="Zafar N."/>
            <person name="Zhou L."/>
            <person name="Fraser C.M."/>
        </authorList>
    </citation>
    <scope>NUCLEOTIDE SEQUENCE [LARGE SCALE GENOMIC DNA]</scope>
    <source>
        <strain>ATCC 23344</strain>
    </source>
</reference>
<evidence type="ECO:0000255" key="1">
    <source>
        <dbReference type="HAMAP-Rule" id="MF_01261"/>
    </source>
</evidence>
<dbReference type="EC" id="2.7.7.72" evidence="1"/>
<dbReference type="EC" id="3.1.3.-" evidence="1"/>
<dbReference type="EC" id="3.1.4.-" evidence="1"/>
<dbReference type="EMBL" id="CP000010">
    <property type="protein sequence ID" value="AAU48571.1"/>
    <property type="molecule type" value="Genomic_DNA"/>
</dbReference>
<dbReference type="RefSeq" id="WP_004197240.1">
    <property type="nucleotide sequence ID" value="NC_006348.1"/>
</dbReference>
<dbReference type="RefSeq" id="YP_104787.1">
    <property type="nucleotide sequence ID" value="NC_006348.1"/>
</dbReference>
<dbReference type="SMR" id="Q62EU1"/>
<dbReference type="KEGG" id="bma:BMA3317"/>
<dbReference type="PATRIC" id="fig|243160.12.peg.3404"/>
<dbReference type="eggNOG" id="COG0617">
    <property type="taxonomic scope" value="Bacteria"/>
</dbReference>
<dbReference type="HOGENOM" id="CLU_015961_1_1_4"/>
<dbReference type="Proteomes" id="UP000006693">
    <property type="component" value="Chromosome 1"/>
</dbReference>
<dbReference type="GO" id="GO:0005524">
    <property type="term" value="F:ATP binding"/>
    <property type="evidence" value="ECO:0007669"/>
    <property type="project" value="UniProtKB-UniRule"/>
</dbReference>
<dbReference type="GO" id="GO:0004810">
    <property type="term" value="F:CCA tRNA nucleotidyltransferase activity"/>
    <property type="evidence" value="ECO:0007669"/>
    <property type="project" value="UniProtKB-UniRule"/>
</dbReference>
<dbReference type="GO" id="GO:0004112">
    <property type="term" value="F:cyclic-nucleotide phosphodiesterase activity"/>
    <property type="evidence" value="ECO:0007669"/>
    <property type="project" value="UniProtKB-UniRule"/>
</dbReference>
<dbReference type="GO" id="GO:0000287">
    <property type="term" value="F:magnesium ion binding"/>
    <property type="evidence" value="ECO:0007669"/>
    <property type="project" value="UniProtKB-UniRule"/>
</dbReference>
<dbReference type="GO" id="GO:0016791">
    <property type="term" value="F:phosphatase activity"/>
    <property type="evidence" value="ECO:0007669"/>
    <property type="project" value="UniProtKB-UniRule"/>
</dbReference>
<dbReference type="GO" id="GO:0000049">
    <property type="term" value="F:tRNA binding"/>
    <property type="evidence" value="ECO:0007669"/>
    <property type="project" value="UniProtKB-UniRule"/>
</dbReference>
<dbReference type="GO" id="GO:0042245">
    <property type="term" value="P:RNA repair"/>
    <property type="evidence" value="ECO:0007669"/>
    <property type="project" value="UniProtKB-KW"/>
</dbReference>
<dbReference type="GO" id="GO:0001680">
    <property type="term" value="P:tRNA 3'-terminal CCA addition"/>
    <property type="evidence" value="ECO:0007669"/>
    <property type="project" value="UniProtKB-UniRule"/>
</dbReference>
<dbReference type="CDD" id="cd05398">
    <property type="entry name" value="NT_ClassII-CCAase"/>
    <property type="match status" value="1"/>
</dbReference>
<dbReference type="Gene3D" id="3.30.460.10">
    <property type="entry name" value="Beta Polymerase, domain 2"/>
    <property type="match status" value="1"/>
</dbReference>
<dbReference type="Gene3D" id="1.10.3090.10">
    <property type="entry name" value="cca-adding enzyme, domain 2"/>
    <property type="match status" value="1"/>
</dbReference>
<dbReference type="HAMAP" id="MF_01261">
    <property type="entry name" value="CCA_bact_type1"/>
    <property type="match status" value="1"/>
</dbReference>
<dbReference type="HAMAP" id="MF_01262">
    <property type="entry name" value="CCA_bact_type2"/>
    <property type="match status" value="1"/>
</dbReference>
<dbReference type="InterPro" id="IPR012006">
    <property type="entry name" value="CCA_bact"/>
</dbReference>
<dbReference type="InterPro" id="IPR006674">
    <property type="entry name" value="HD_domain"/>
</dbReference>
<dbReference type="InterPro" id="IPR043519">
    <property type="entry name" value="NT_sf"/>
</dbReference>
<dbReference type="InterPro" id="IPR002646">
    <property type="entry name" value="PolA_pol_head_dom"/>
</dbReference>
<dbReference type="InterPro" id="IPR032828">
    <property type="entry name" value="PolyA_RNA-bd"/>
</dbReference>
<dbReference type="InterPro" id="IPR050124">
    <property type="entry name" value="tRNA_CCA-adding_enzyme"/>
</dbReference>
<dbReference type="NCBIfam" id="NF008137">
    <property type="entry name" value="PRK10885.1"/>
    <property type="match status" value="1"/>
</dbReference>
<dbReference type="PANTHER" id="PTHR47545">
    <property type="entry name" value="MULTIFUNCTIONAL CCA PROTEIN"/>
    <property type="match status" value="1"/>
</dbReference>
<dbReference type="PANTHER" id="PTHR47545:SF1">
    <property type="entry name" value="MULTIFUNCTIONAL CCA PROTEIN"/>
    <property type="match status" value="1"/>
</dbReference>
<dbReference type="Pfam" id="PF01966">
    <property type="entry name" value="HD"/>
    <property type="match status" value="1"/>
</dbReference>
<dbReference type="Pfam" id="PF01743">
    <property type="entry name" value="PolyA_pol"/>
    <property type="match status" value="1"/>
</dbReference>
<dbReference type="Pfam" id="PF12627">
    <property type="entry name" value="PolyA_pol_RNAbd"/>
    <property type="match status" value="1"/>
</dbReference>
<dbReference type="PIRSF" id="PIRSF000813">
    <property type="entry name" value="CCA_bact"/>
    <property type="match status" value="1"/>
</dbReference>
<dbReference type="SUPFAM" id="SSF81301">
    <property type="entry name" value="Nucleotidyltransferase"/>
    <property type="match status" value="1"/>
</dbReference>
<dbReference type="SUPFAM" id="SSF81891">
    <property type="entry name" value="Poly A polymerase C-terminal region-like"/>
    <property type="match status" value="1"/>
</dbReference>
<dbReference type="PROSITE" id="PS51831">
    <property type="entry name" value="HD"/>
    <property type="match status" value="1"/>
</dbReference>
<feature type="chain" id="PRO_0000138972" description="Multifunctional CCA protein">
    <location>
        <begin position="1"/>
        <end position="413"/>
    </location>
</feature>
<feature type="domain" description="HD" evidence="1">
    <location>
        <begin position="232"/>
        <end position="333"/>
    </location>
</feature>
<feature type="binding site" evidence="1">
    <location>
        <position position="8"/>
    </location>
    <ligand>
        <name>ATP</name>
        <dbReference type="ChEBI" id="CHEBI:30616"/>
    </ligand>
</feature>
<feature type="binding site" evidence="1">
    <location>
        <position position="8"/>
    </location>
    <ligand>
        <name>CTP</name>
        <dbReference type="ChEBI" id="CHEBI:37563"/>
    </ligand>
</feature>
<feature type="binding site" evidence="1">
    <location>
        <position position="11"/>
    </location>
    <ligand>
        <name>ATP</name>
        <dbReference type="ChEBI" id="CHEBI:30616"/>
    </ligand>
</feature>
<feature type="binding site" evidence="1">
    <location>
        <position position="11"/>
    </location>
    <ligand>
        <name>CTP</name>
        <dbReference type="ChEBI" id="CHEBI:37563"/>
    </ligand>
</feature>
<feature type="binding site" evidence="1">
    <location>
        <position position="21"/>
    </location>
    <ligand>
        <name>Mg(2+)</name>
        <dbReference type="ChEBI" id="CHEBI:18420"/>
    </ligand>
</feature>
<feature type="binding site" evidence="1">
    <location>
        <position position="23"/>
    </location>
    <ligand>
        <name>Mg(2+)</name>
        <dbReference type="ChEBI" id="CHEBI:18420"/>
    </ligand>
</feature>
<feature type="binding site" evidence="1">
    <location>
        <position position="91"/>
    </location>
    <ligand>
        <name>ATP</name>
        <dbReference type="ChEBI" id="CHEBI:30616"/>
    </ligand>
</feature>
<feature type="binding site" evidence="1">
    <location>
        <position position="91"/>
    </location>
    <ligand>
        <name>CTP</name>
        <dbReference type="ChEBI" id="CHEBI:37563"/>
    </ligand>
</feature>
<feature type="binding site" evidence="1">
    <location>
        <position position="143"/>
    </location>
    <ligand>
        <name>ATP</name>
        <dbReference type="ChEBI" id="CHEBI:30616"/>
    </ligand>
</feature>
<feature type="binding site" evidence="1">
    <location>
        <position position="143"/>
    </location>
    <ligand>
        <name>CTP</name>
        <dbReference type="ChEBI" id="CHEBI:37563"/>
    </ligand>
</feature>
<feature type="binding site" evidence="1">
    <location>
        <position position="146"/>
    </location>
    <ligand>
        <name>ATP</name>
        <dbReference type="ChEBI" id="CHEBI:30616"/>
    </ligand>
</feature>
<feature type="binding site" evidence="1">
    <location>
        <position position="146"/>
    </location>
    <ligand>
        <name>CTP</name>
        <dbReference type="ChEBI" id="CHEBI:37563"/>
    </ligand>
</feature>
<protein>
    <recommendedName>
        <fullName evidence="1">Multifunctional CCA protein</fullName>
    </recommendedName>
    <domain>
        <recommendedName>
            <fullName evidence="1">CCA-adding enzyme</fullName>
            <ecNumber evidence="1">2.7.7.72</ecNumber>
        </recommendedName>
        <alternativeName>
            <fullName evidence="1">CCA tRNA nucleotidyltransferase</fullName>
        </alternativeName>
        <alternativeName>
            <fullName evidence="1">tRNA CCA-pyrophosphorylase</fullName>
        </alternativeName>
        <alternativeName>
            <fullName evidence="1">tRNA adenylyl-/cytidylyl-transferase</fullName>
        </alternativeName>
        <alternativeName>
            <fullName evidence="1">tRNA nucleotidyltransferase</fullName>
        </alternativeName>
        <alternativeName>
            <fullName evidence="1">tRNA-NT</fullName>
        </alternativeName>
    </domain>
    <domain>
        <recommendedName>
            <fullName evidence="1">2'-nucleotidase</fullName>
            <ecNumber evidence="1">3.1.3.-</ecNumber>
        </recommendedName>
    </domain>
    <domain>
        <recommendedName>
            <fullName evidence="1">2',3'-cyclic phosphodiesterase</fullName>
            <ecNumber evidence="1">3.1.4.-</ecNumber>
        </recommendedName>
    </domain>
    <domain>
        <recommendedName>
            <fullName evidence="1">Phosphatase</fullName>
            <ecNumber evidence="1">3.1.3.-</ecNumber>
        </recommendedName>
    </domain>
</protein>
<organism>
    <name type="scientific">Burkholderia mallei (strain ATCC 23344)</name>
    <dbReference type="NCBI Taxonomy" id="243160"/>
    <lineage>
        <taxon>Bacteria</taxon>
        <taxon>Pseudomonadati</taxon>
        <taxon>Pseudomonadota</taxon>
        <taxon>Betaproteobacteria</taxon>
        <taxon>Burkholderiales</taxon>
        <taxon>Burkholderiaceae</taxon>
        <taxon>Burkholderia</taxon>
        <taxon>pseudomallei group</taxon>
    </lineage>
</organism>
<accession>Q62EU1</accession>
<sequence>MKIYAVGGAIRDALLGLPVRDRDYVVVGATPEQMAAQRFRPVGKDFPVFLHPDTHEEYALARTERKTAAGYHGFQFYYAPDVTLEQDLVRRDLTINAMAREVSPDGALVGPVVDPFGGQADLRAKLFRHVGDAFVEDPVRILRVARFAARFAEFAVAPDTAALMRAMVDAGEVDALVPERVWQELARGLMEAKPSRMFAVLRECGALARILPEIDALFGVPQRADYHPEVDTGVHVMMVIDHAAKQGYSLPVRFAALTHDLGKATTPADVLPRHIGHEGRSVDLLKPLCERLRVPNECRDLALVVAREHGNLHRVMEMGAAALVRLLERADALRKPARFAEALQASEADARGRLGLETKPYPQAERLRQALVAARAVDAGAIAQGLAGEPAKIKDAVHRARVRAVAQAVGVAD</sequence>
<gene>
    <name evidence="1" type="primary">cca</name>
    <name type="ordered locus">BMA3317</name>
</gene>
<proteinExistence type="inferred from homology"/>
<comment type="function">
    <text evidence="1">Catalyzes the addition and repair of the essential 3'-terminal CCA sequence in tRNAs without using a nucleic acid template. Adds these three nucleotides in the order of C, C, and A to the tRNA nucleotide-73, using CTP and ATP as substrates and producing inorganic pyrophosphate. tRNA 3'-terminal CCA addition is required both for tRNA processing and repair. Also involved in tRNA surveillance by mediating tandem CCA addition to generate a CCACCA at the 3' terminus of unstable tRNAs. While stable tRNAs receive only 3'-terminal CCA, unstable tRNAs are marked with CCACCA and rapidly degraded.</text>
</comment>
<comment type="catalytic activity">
    <reaction evidence="1">
        <text>a tRNA precursor + 2 CTP + ATP = a tRNA with a 3' CCA end + 3 diphosphate</text>
        <dbReference type="Rhea" id="RHEA:14433"/>
        <dbReference type="Rhea" id="RHEA-COMP:10465"/>
        <dbReference type="Rhea" id="RHEA-COMP:10468"/>
        <dbReference type="ChEBI" id="CHEBI:30616"/>
        <dbReference type="ChEBI" id="CHEBI:33019"/>
        <dbReference type="ChEBI" id="CHEBI:37563"/>
        <dbReference type="ChEBI" id="CHEBI:74896"/>
        <dbReference type="ChEBI" id="CHEBI:83071"/>
        <dbReference type="EC" id="2.7.7.72"/>
    </reaction>
</comment>
<comment type="catalytic activity">
    <reaction evidence="1">
        <text>a tRNA with a 3' CCA end + 2 CTP + ATP = a tRNA with a 3' CCACCA end + 3 diphosphate</text>
        <dbReference type="Rhea" id="RHEA:76235"/>
        <dbReference type="Rhea" id="RHEA-COMP:10468"/>
        <dbReference type="Rhea" id="RHEA-COMP:18655"/>
        <dbReference type="ChEBI" id="CHEBI:30616"/>
        <dbReference type="ChEBI" id="CHEBI:33019"/>
        <dbReference type="ChEBI" id="CHEBI:37563"/>
        <dbReference type="ChEBI" id="CHEBI:83071"/>
        <dbReference type="ChEBI" id="CHEBI:195187"/>
    </reaction>
    <physiologicalReaction direction="left-to-right" evidence="1">
        <dbReference type="Rhea" id="RHEA:76236"/>
    </physiologicalReaction>
</comment>
<comment type="cofactor">
    <cofactor evidence="1">
        <name>Mg(2+)</name>
        <dbReference type="ChEBI" id="CHEBI:18420"/>
    </cofactor>
    <text evidence="1">Magnesium is required for nucleotidyltransferase activity.</text>
</comment>
<comment type="cofactor">
    <cofactor evidence="1">
        <name>Ni(2+)</name>
        <dbReference type="ChEBI" id="CHEBI:49786"/>
    </cofactor>
    <text evidence="1">Nickel for phosphatase activity.</text>
</comment>
<comment type="subunit">
    <text evidence="1">Monomer. Can also form homodimers and oligomers.</text>
</comment>
<comment type="domain">
    <text evidence="1">Comprises two domains: an N-terminal domain containing the nucleotidyltransferase activity and a C-terminal HD domain associated with both phosphodiesterase and phosphatase activities.</text>
</comment>
<comment type="miscellaneous">
    <text evidence="1">A single active site specifically recognizes both ATP and CTP and is responsible for their addition.</text>
</comment>
<comment type="similarity">
    <text evidence="1">Belongs to the tRNA nucleotidyltransferase/poly(A) polymerase family. Bacterial CCA-adding enzyme type 1 subfamily.</text>
</comment>
<name>CCA_BURMA</name>